<protein>
    <recommendedName>
        <fullName>Putative N-acetylmuramoyl-L-alanine amidase</fullName>
        <ecNumber>3.5.1.28</ecNumber>
    </recommendedName>
</protein>
<name>AMIB_BUCBP</name>
<organism>
    <name type="scientific">Buchnera aphidicola subsp. Baizongia pistaciae (strain Bp)</name>
    <dbReference type="NCBI Taxonomy" id="224915"/>
    <lineage>
        <taxon>Bacteria</taxon>
        <taxon>Pseudomonadati</taxon>
        <taxon>Pseudomonadota</taxon>
        <taxon>Gammaproteobacteria</taxon>
        <taxon>Enterobacterales</taxon>
        <taxon>Erwiniaceae</taxon>
        <taxon>Buchnera</taxon>
    </lineage>
</organism>
<evidence type="ECO:0000250" key="1"/>
<evidence type="ECO:0000255" key="2"/>
<evidence type="ECO:0000305" key="3"/>
<feature type="chain" id="PRO_0000164423" description="Putative N-acetylmuramoyl-L-alanine amidase">
    <location>
        <begin position="1"/>
        <end position="217"/>
    </location>
</feature>
<feature type="domain" description="MurNAc-LAA" evidence="2">
    <location>
        <begin position="3"/>
        <end position="206"/>
    </location>
</feature>
<gene>
    <name type="primary">amiB</name>
    <name type="ordered locus">bbp_521</name>
</gene>
<dbReference type="EC" id="3.5.1.28"/>
<dbReference type="EMBL" id="AE016826">
    <property type="protein sequence ID" value="AAO27223.1"/>
    <property type="molecule type" value="Genomic_DNA"/>
</dbReference>
<dbReference type="SMR" id="Q89A33"/>
<dbReference type="STRING" id="224915.bbp_521"/>
<dbReference type="KEGG" id="bab:bbp_521"/>
<dbReference type="eggNOG" id="COG0860">
    <property type="taxonomic scope" value="Bacteria"/>
</dbReference>
<dbReference type="HOGENOM" id="CLU_014322_4_1_6"/>
<dbReference type="OrthoDB" id="9806267at2"/>
<dbReference type="Proteomes" id="UP000000601">
    <property type="component" value="Chromosome"/>
</dbReference>
<dbReference type="GO" id="GO:0005576">
    <property type="term" value="C:extracellular region"/>
    <property type="evidence" value="ECO:0007669"/>
    <property type="project" value="UniProtKB-SubCell"/>
</dbReference>
<dbReference type="GO" id="GO:0030288">
    <property type="term" value="C:outer membrane-bounded periplasmic space"/>
    <property type="evidence" value="ECO:0007669"/>
    <property type="project" value="TreeGrafter"/>
</dbReference>
<dbReference type="GO" id="GO:0008745">
    <property type="term" value="F:N-acetylmuramoyl-L-alanine amidase activity"/>
    <property type="evidence" value="ECO:0007669"/>
    <property type="project" value="UniProtKB-EC"/>
</dbReference>
<dbReference type="GO" id="GO:0071555">
    <property type="term" value="P:cell wall organization"/>
    <property type="evidence" value="ECO:0007669"/>
    <property type="project" value="UniProtKB-KW"/>
</dbReference>
<dbReference type="GO" id="GO:0009253">
    <property type="term" value="P:peptidoglycan catabolic process"/>
    <property type="evidence" value="ECO:0007669"/>
    <property type="project" value="InterPro"/>
</dbReference>
<dbReference type="CDD" id="cd02696">
    <property type="entry name" value="MurNAc-LAA"/>
    <property type="match status" value="1"/>
</dbReference>
<dbReference type="Gene3D" id="3.40.630.40">
    <property type="entry name" value="Zn-dependent exopeptidases"/>
    <property type="match status" value="1"/>
</dbReference>
<dbReference type="InterPro" id="IPR002508">
    <property type="entry name" value="MurNAc-LAA_cat"/>
</dbReference>
<dbReference type="InterPro" id="IPR050695">
    <property type="entry name" value="N-acetylmuramoyl_amidase_3"/>
</dbReference>
<dbReference type="PANTHER" id="PTHR30404">
    <property type="entry name" value="N-ACETYLMURAMOYL-L-ALANINE AMIDASE"/>
    <property type="match status" value="1"/>
</dbReference>
<dbReference type="PANTHER" id="PTHR30404:SF6">
    <property type="entry name" value="N-ACETYLMURAMOYL-L-ALANINE AMIDASE AMIB"/>
    <property type="match status" value="1"/>
</dbReference>
<dbReference type="Pfam" id="PF01520">
    <property type="entry name" value="Amidase_3"/>
    <property type="match status" value="1"/>
</dbReference>
<dbReference type="SMART" id="SM00646">
    <property type="entry name" value="Ami_3"/>
    <property type="match status" value="1"/>
</dbReference>
<dbReference type="SUPFAM" id="SSF53187">
    <property type="entry name" value="Zn-dependent exopeptidases"/>
    <property type="match status" value="1"/>
</dbReference>
<proteinExistence type="inferred from homology"/>
<accession>Q89A33</accession>
<keyword id="KW-0961">Cell wall biogenesis/degradation</keyword>
<keyword id="KW-0378">Hydrolase</keyword>
<keyword id="KW-1185">Reference proteome</keyword>
<keyword id="KW-0964">Secreted</keyword>
<comment type="function">
    <text evidence="1">Cell-wall hydrolase involved in septum cleavage during cell division.</text>
</comment>
<comment type="catalytic activity">
    <reaction>
        <text>Hydrolyzes the link between N-acetylmuramoyl residues and L-amino acid residues in certain cell-wall glycopeptides.</text>
        <dbReference type="EC" id="3.5.1.28"/>
    </reaction>
</comment>
<comment type="subcellular location">
    <subcellularLocation>
        <location evidence="3">Secreted</location>
    </subcellularLocation>
</comment>
<comment type="similarity">
    <text evidence="3">Belongs to the N-acetylmuramoyl-L-alanine amidase 3 family.</text>
</comment>
<reference key="1">
    <citation type="journal article" date="2003" name="Proc. Natl. Acad. Sci. U.S.A.">
        <title>Reductive genome evolution in Buchnera aphidicola.</title>
        <authorList>
            <person name="van Ham R.C.H.J."/>
            <person name="Kamerbeek J."/>
            <person name="Palacios C."/>
            <person name="Rausell C."/>
            <person name="Abascal F."/>
            <person name="Bastolla U."/>
            <person name="Fernandez J.M."/>
            <person name="Jimenez L."/>
            <person name="Postigo M."/>
            <person name="Silva F.J."/>
            <person name="Tamames J."/>
            <person name="Viguera E."/>
            <person name="Latorre A."/>
            <person name="Valencia A."/>
            <person name="Moran F."/>
            <person name="Moya A."/>
        </authorList>
    </citation>
    <scope>NUCLEOTIDE SEQUENCE [LARGE SCALE GENOMIC DNA]</scope>
    <source>
        <strain>Bp</strain>
    </source>
</reference>
<sequence length="217" mass="25202">MIIAIDAGHGGQDPGAIGKNKFQEKNITLSIAKKLTKLLNHTNFFKAVMIRRGNYFLSVFKRTQIAEKYHANLLISIHANSSKNRKISGVSIWVLPKNVHNTRIQKHKLNKKTKNIHKKINTKTSKFKNFYEIEYDLAKIIIQELRKVSTLNQKKPKYAKFGILKFSQFPSILVETGFISNPIEEQHLNKKFYQNLISKSISIALKKYFLKRIKQYN</sequence>